<reference key="1">
    <citation type="journal article" date="2008" name="Chem. Biol. Interact.">
        <title>Extending the Bacillus cereus group genomics to putative food-borne pathogens of different toxicity.</title>
        <authorList>
            <person name="Lapidus A."/>
            <person name="Goltsman E."/>
            <person name="Auger S."/>
            <person name="Galleron N."/>
            <person name="Segurens B."/>
            <person name="Dossat C."/>
            <person name="Land M.L."/>
            <person name="Broussolle V."/>
            <person name="Brillard J."/>
            <person name="Guinebretiere M.-H."/>
            <person name="Sanchis V."/>
            <person name="Nguen-the C."/>
            <person name="Lereclus D."/>
            <person name="Richardson P."/>
            <person name="Wincker P."/>
            <person name="Weissenbach J."/>
            <person name="Ehrlich S.D."/>
            <person name="Sorokin A."/>
        </authorList>
    </citation>
    <scope>NUCLEOTIDE SEQUENCE [LARGE SCALE GENOMIC DNA]</scope>
    <source>
        <strain>DSM 22905 / CIP 110041 / 391-98 / NVH 391-98</strain>
    </source>
</reference>
<proteinExistence type="inferred from homology"/>
<dbReference type="EC" id="2.5.1.n9" evidence="1"/>
<dbReference type="EMBL" id="CP000764">
    <property type="protein sequence ID" value="ABS20647.1"/>
    <property type="molecule type" value="Genomic_DNA"/>
</dbReference>
<dbReference type="RefSeq" id="WP_011983406.1">
    <property type="nucleotide sequence ID" value="NC_009674.1"/>
</dbReference>
<dbReference type="SMR" id="A7GKI9"/>
<dbReference type="STRING" id="315749.Bcer98_0284"/>
<dbReference type="GeneID" id="33895638"/>
<dbReference type="KEGG" id="bcy:Bcer98_0284"/>
<dbReference type="eggNOG" id="COG1646">
    <property type="taxonomic scope" value="Bacteria"/>
</dbReference>
<dbReference type="HOGENOM" id="CLU_095211_0_0_9"/>
<dbReference type="OrthoDB" id="2381757at2"/>
<dbReference type="UniPathway" id="UPA00940"/>
<dbReference type="Proteomes" id="UP000002300">
    <property type="component" value="Chromosome"/>
</dbReference>
<dbReference type="GO" id="GO:0120536">
    <property type="term" value="F:heptaprenylglyceryl phosphate synthase activity"/>
    <property type="evidence" value="ECO:0007669"/>
    <property type="project" value="RHEA"/>
</dbReference>
<dbReference type="GO" id="GO:0000287">
    <property type="term" value="F:magnesium ion binding"/>
    <property type="evidence" value="ECO:0007669"/>
    <property type="project" value="UniProtKB-UniRule"/>
</dbReference>
<dbReference type="GO" id="GO:0046474">
    <property type="term" value="P:glycerophospholipid biosynthetic process"/>
    <property type="evidence" value="ECO:0007669"/>
    <property type="project" value="UniProtKB-UniRule"/>
</dbReference>
<dbReference type="CDD" id="cd02812">
    <property type="entry name" value="PcrB_like"/>
    <property type="match status" value="1"/>
</dbReference>
<dbReference type="FunFam" id="3.20.20.390:FF:000001">
    <property type="entry name" value="Heptaprenylglyceryl phosphate synthase"/>
    <property type="match status" value="1"/>
</dbReference>
<dbReference type="Gene3D" id="3.20.20.390">
    <property type="entry name" value="FMN-linked oxidoreductases"/>
    <property type="match status" value="1"/>
</dbReference>
<dbReference type="HAMAP" id="MF_00112">
    <property type="entry name" value="GGGP_HepGP_synthase"/>
    <property type="match status" value="1"/>
</dbReference>
<dbReference type="InterPro" id="IPR039074">
    <property type="entry name" value="GGGP/HepGP_synthase_I"/>
</dbReference>
<dbReference type="InterPro" id="IPR038597">
    <property type="entry name" value="GGGP/HepGP_synthase_sf"/>
</dbReference>
<dbReference type="InterPro" id="IPR008205">
    <property type="entry name" value="GGGP_HepGP_synthase"/>
</dbReference>
<dbReference type="NCBIfam" id="TIGR01768">
    <property type="entry name" value="GGGP-family"/>
    <property type="match status" value="1"/>
</dbReference>
<dbReference type="NCBIfam" id="NF003197">
    <property type="entry name" value="PRK04169.1-1"/>
    <property type="match status" value="1"/>
</dbReference>
<dbReference type="NCBIfam" id="NF003199">
    <property type="entry name" value="PRK04169.1-3"/>
    <property type="match status" value="1"/>
</dbReference>
<dbReference type="PANTHER" id="PTHR40029">
    <property type="match status" value="1"/>
</dbReference>
<dbReference type="PANTHER" id="PTHR40029:SF2">
    <property type="entry name" value="HEPTAPRENYLGLYCERYL PHOSPHATE SYNTHASE"/>
    <property type="match status" value="1"/>
</dbReference>
<dbReference type="Pfam" id="PF01884">
    <property type="entry name" value="PcrB"/>
    <property type="match status" value="1"/>
</dbReference>
<dbReference type="SUPFAM" id="SSF51395">
    <property type="entry name" value="FMN-linked oxidoreductases"/>
    <property type="match status" value="1"/>
</dbReference>
<sequence>MYDISKWKHVFKLDPNKEISDEHLEMICESGTDAVIVGGSDGVTIDNVLHMLVSIRRYAVPCVLEVSNVEAITPGFDFYYIPSVLNSRKVEWLTGVHHEALKEFGDIMNWDEIFMEGYCVLNPEAKVAQLTEAKCDLTEDDVIAYARMADKLLHLPIFYLEYSGTYGDVELVKKVKAELQQAKLYYGGGISNVKEAKEVAQYADTVVVGNVIYENIKAALQTVKAVKGE</sequence>
<feature type="chain" id="PRO_1000075987" description="Heptaprenylglyceryl phosphate synthase">
    <location>
        <begin position="1"/>
        <end position="229"/>
    </location>
</feature>
<feature type="binding site" evidence="1">
    <location>
        <position position="12"/>
    </location>
    <ligand>
        <name>sn-glycerol 1-phosphate</name>
        <dbReference type="ChEBI" id="CHEBI:57685"/>
    </ligand>
</feature>
<feature type="binding site" evidence="1">
    <location>
        <position position="14"/>
    </location>
    <ligand>
        <name>Mg(2+)</name>
        <dbReference type="ChEBI" id="CHEBI:18420"/>
    </ligand>
</feature>
<feature type="binding site" evidence="1">
    <location>
        <position position="40"/>
    </location>
    <ligand>
        <name>Mg(2+)</name>
        <dbReference type="ChEBI" id="CHEBI:18420"/>
    </ligand>
</feature>
<feature type="binding site" evidence="1">
    <location>
        <begin position="159"/>
        <end position="164"/>
    </location>
    <ligand>
        <name>sn-glycerol 1-phosphate</name>
        <dbReference type="ChEBI" id="CHEBI:57685"/>
    </ligand>
</feature>
<feature type="binding site" evidence="1">
    <location>
        <position position="189"/>
    </location>
    <ligand>
        <name>sn-glycerol 1-phosphate</name>
        <dbReference type="ChEBI" id="CHEBI:57685"/>
    </ligand>
</feature>
<feature type="binding site" evidence="1">
    <location>
        <begin position="209"/>
        <end position="210"/>
    </location>
    <ligand>
        <name>sn-glycerol 1-phosphate</name>
        <dbReference type="ChEBI" id="CHEBI:57685"/>
    </ligand>
</feature>
<keyword id="KW-0444">Lipid biosynthesis</keyword>
<keyword id="KW-0443">Lipid metabolism</keyword>
<keyword id="KW-0460">Magnesium</keyword>
<keyword id="KW-0479">Metal-binding</keyword>
<keyword id="KW-0594">Phospholipid biosynthesis</keyword>
<keyword id="KW-1208">Phospholipid metabolism</keyword>
<keyword id="KW-0808">Transferase</keyword>
<name>PCRB_BACCN</name>
<organism>
    <name type="scientific">Bacillus cytotoxicus (strain DSM 22905 / CIP 110041 / 391-98 / NVH 391-98)</name>
    <dbReference type="NCBI Taxonomy" id="315749"/>
    <lineage>
        <taxon>Bacteria</taxon>
        <taxon>Bacillati</taxon>
        <taxon>Bacillota</taxon>
        <taxon>Bacilli</taxon>
        <taxon>Bacillales</taxon>
        <taxon>Bacillaceae</taxon>
        <taxon>Bacillus</taxon>
        <taxon>Bacillus cereus group</taxon>
    </lineage>
</organism>
<comment type="function">
    <text evidence="1">Prenyltransferase that catalyzes in vivo the transfer of the heptaprenyl moiety of heptaprenyl pyrophosphate (HepPP; 35 carbon atoms) to the C3 hydroxyl of sn-glycerol-1-phosphate (G1P), producing heptaprenylglyceryl phosphate (HepGP). This reaction is an ether-bond-formation step in the biosynthesis of archaea-type G1P-based membrane lipids found in Bacillales.</text>
</comment>
<comment type="catalytic activity">
    <reaction evidence="1">
        <text>sn-glycerol 1-phosphate + all-trans-heptaprenyl diphosphate = 3-heptaprenyl-sn-glycero-1-phosphate + diphosphate</text>
        <dbReference type="Rhea" id="RHEA:33495"/>
        <dbReference type="ChEBI" id="CHEBI:33019"/>
        <dbReference type="ChEBI" id="CHEBI:57685"/>
        <dbReference type="ChEBI" id="CHEBI:58206"/>
        <dbReference type="ChEBI" id="CHEBI:64781"/>
        <dbReference type="EC" id="2.5.1.n9"/>
    </reaction>
</comment>
<comment type="cofactor">
    <cofactor evidence="1">
        <name>Mg(2+)</name>
        <dbReference type="ChEBI" id="CHEBI:18420"/>
    </cofactor>
</comment>
<comment type="pathway">
    <text evidence="1">Membrane lipid metabolism; glycerophospholipid metabolism.</text>
</comment>
<comment type="subunit">
    <text evidence="1">Homodimer.</text>
</comment>
<comment type="similarity">
    <text evidence="1">Belongs to the GGGP/HepGP synthase family. Group I subfamily.</text>
</comment>
<accession>A7GKI9</accession>
<protein>
    <recommendedName>
        <fullName evidence="1">Heptaprenylglyceryl phosphate synthase</fullName>
        <shortName evidence="1">HepGP synthase</shortName>
        <ecNumber evidence="1">2.5.1.n9</ecNumber>
    </recommendedName>
    <alternativeName>
        <fullName evidence="1">Glycerol-1-phosphate heptaprenyltransferase</fullName>
    </alternativeName>
</protein>
<gene>
    <name evidence="1" type="primary">pcrB</name>
    <name type="ordered locus">Bcer98_0284</name>
</gene>
<evidence type="ECO:0000255" key="1">
    <source>
        <dbReference type="HAMAP-Rule" id="MF_00112"/>
    </source>
</evidence>